<protein>
    <recommendedName>
        <fullName evidence="1">Ion-translocating oxidoreductase complex subunit G</fullName>
        <ecNumber evidence="1">7.-.-.-</ecNumber>
    </recommendedName>
    <alternativeName>
        <fullName evidence="1">Rnf electron transport complex subunit G</fullName>
    </alternativeName>
</protein>
<gene>
    <name evidence="1" type="primary">rnfG</name>
    <name type="ordered locus">ESA_01990</name>
</gene>
<dbReference type="EC" id="7.-.-.-" evidence="1"/>
<dbReference type="EMBL" id="CP000783">
    <property type="protein sequence ID" value="ABU77243.1"/>
    <property type="molecule type" value="Genomic_DNA"/>
</dbReference>
<dbReference type="SMR" id="A7MML1"/>
<dbReference type="KEGG" id="esa:ESA_01990"/>
<dbReference type="HOGENOM" id="CLU_077882_1_0_6"/>
<dbReference type="Proteomes" id="UP000000260">
    <property type="component" value="Chromosome"/>
</dbReference>
<dbReference type="GO" id="GO:0005886">
    <property type="term" value="C:plasma membrane"/>
    <property type="evidence" value="ECO:0007669"/>
    <property type="project" value="UniProtKB-SubCell"/>
</dbReference>
<dbReference type="GO" id="GO:0009055">
    <property type="term" value="F:electron transfer activity"/>
    <property type="evidence" value="ECO:0007669"/>
    <property type="project" value="InterPro"/>
</dbReference>
<dbReference type="GO" id="GO:0010181">
    <property type="term" value="F:FMN binding"/>
    <property type="evidence" value="ECO:0007669"/>
    <property type="project" value="InterPro"/>
</dbReference>
<dbReference type="GO" id="GO:0022900">
    <property type="term" value="P:electron transport chain"/>
    <property type="evidence" value="ECO:0007669"/>
    <property type="project" value="UniProtKB-UniRule"/>
</dbReference>
<dbReference type="HAMAP" id="MF_00479">
    <property type="entry name" value="RsxG_RnfG"/>
    <property type="match status" value="1"/>
</dbReference>
<dbReference type="InterPro" id="IPR007329">
    <property type="entry name" value="FMN-bd"/>
</dbReference>
<dbReference type="InterPro" id="IPR010209">
    <property type="entry name" value="Ion_transpt_RnfG/RsxG"/>
</dbReference>
<dbReference type="NCBIfam" id="NF002519">
    <property type="entry name" value="PRK01908.1"/>
    <property type="match status" value="1"/>
</dbReference>
<dbReference type="NCBIfam" id="TIGR01947">
    <property type="entry name" value="rnfG"/>
    <property type="match status" value="1"/>
</dbReference>
<dbReference type="PANTHER" id="PTHR36118">
    <property type="entry name" value="ION-TRANSLOCATING OXIDOREDUCTASE COMPLEX SUBUNIT G"/>
    <property type="match status" value="1"/>
</dbReference>
<dbReference type="PANTHER" id="PTHR36118:SF1">
    <property type="entry name" value="ION-TRANSLOCATING OXIDOREDUCTASE COMPLEX SUBUNIT G"/>
    <property type="match status" value="1"/>
</dbReference>
<dbReference type="Pfam" id="PF04205">
    <property type="entry name" value="FMN_bind"/>
    <property type="match status" value="1"/>
</dbReference>
<dbReference type="PIRSF" id="PIRSF006091">
    <property type="entry name" value="E_trnsport_RnfG"/>
    <property type="match status" value="1"/>
</dbReference>
<dbReference type="SMART" id="SM00900">
    <property type="entry name" value="FMN_bind"/>
    <property type="match status" value="1"/>
</dbReference>
<accession>A7MML1</accession>
<keyword id="KW-0997">Cell inner membrane</keyword>
<keyword id="KW-1003">Cell membrane</keyword>
<keyword id="KW-0249">Electron transport</keyword>
<keyword id="KW-0285">Flavoprotein</keyword>
<keyword id="KW-0288">FMN</keyword>
<keyword id="KW-0472">Membrane</keyword>
<keyword id="KW-0597">Phosphoprotein</keyword>
<keyword id="KW-1185">Reference proteome</keyword>
<keyword id="KW-1278">Translocase</keyword>
<keyword id="KW-0812">Transmembrane</keyword>
<keyword id="KW-1133">Transmembrane helix</keyword>
<keyword id="KW-0813">Transport</keyword>
<evidence type="ECO:0000255" key="1">
    <source>
        <dbReference type="HAMAP-Rule" id="MF_00479"/>
    </source>
</evidence>
<sequence length="208" mass="22245">MLKTIQKHGVTLAVFAALTTGLTAMVNALTKTTIEGQAALQQKQLFDQVLPPEMYDNDIQQSCYLVSAPALGRGEKQLWVARKGDTPVAVVMQATAPDGYSGAIQLLVGADFKGTVLGTRVTEHHETPGLGDKIETRISDWITGFAGQVIHGPNDTRWAVKKDGGQFDQFTGATITPRAVVNAVKRAGLYAQTLEPQLSTLPSCGENP</sequence>
<reference key="1">
    <citation type="journal article" date="2010" name="PLoS ONE">
        <title>Genome sequence of Cronobacter sakazakii BAA-894 and comparative genomic hybridization analysis with other Cronobacter species.</title>
        <authorList>
            <person name="Kucerova E."/>
            <person name="Clifton S.W."/>
            <person name="Xia X.Q."/>
            <person name="Long F."/>
            <person name="Porwollik S."/>
            <person name="Fulton L."/>
            <person name="Fronick C."/>
            <person name="Minx P."/>
            <person name="Kyung K."/>
            <person name="Warren W."/>
            <person name="Fulton R."/>
            <person name="Feng D."/>
            <person name="Wollam A."/>
            <person name="Shah N."/>
            <person name="Bhonagiri V."/>
            <person name="Nash W.E."/>
            <person name="Hallsworth-Pepin K."/>
            <person name="Wilson R.K."/>
            <person name="McClelland M."/>
            <person name="Forsythe S.J."/>
        </authorList>
    </citation>
    <scope>NUCLEOTIDE SEQUENCE [LARGE SCALE GENOMIC DNA]</scope>
    <source>
        <strain>ATCC BAA-894</strain>
    </source>
</reference>
<name>RNFG_CROS8</name>
<comment type="function">
    <text evidence="1">Part of a membrane-bound complex that couples electron transfer with translocation of ions across the membrane.</text>
</comment>
<comment type="cofactor">
    <cofactor evidence="1">
        <name>FMN</name>
        <dbReference type="ChEBI" id="CHEBI:58210"/>
    </cofactor>
</comment>
<comment type="subunit">
    <text evidence="1">The complex is composed of six subunits: RnfA, RnfB, RnfC, RnfD, RnfE and RnfG.</text>
</comment>
<comment type="subcellular location">
    <subcellularLocation>
        <location evidence="1">Cell inner membrane</location>
        <topology evidence="1">Single-pass membrane protein</topology>
    </subcellularLocation>
</comment>
<comment type="similarity">
    <text evidence="1">Belongs to the RnfG family.</text>
</comment>
<proteinExistence type="inferred from homology"/>
<organism>
    <name type="scientific">Cronobacter sakazakii (strain ATCC BAA-894)</name>
    <name type="common">Enterobacter sakazakii</name>
    <dbReference type="NCBI Taxonomy" id="290339"/>
    <lineage>
        <taxon>Bacteria</taxon>
        <taxon>Pseudomonadati</taxon>
        <taxon>Pseudomonadota</taxon>
        <taxon>Gammaproteobacteria</taxon>
        <taxon>Enterobacterales</taxon>
        <taxon>Enterobacteriaceae</taxon>
        <taxon>Cronobacter</taxon>
    </lineage>
</organism>
<feature type="chain" id="PRO_1000014118" description="Ion-translocating oxidoreductase complex subunit G">
    <location>
        <begin position="1"/>
        <end position="208"/>
    </location>
</feature>
<feature type="transmembrane region" description="Helical" evidence="1">
    <location>
        <begin position="9"/>
        <end position="29"/>
    </location>
</feature>
<feature type="modified residue" description="FMN phosphoryl threonine" evidence="1">
    <location>
        <position position="174"/>
    </location>
</feature>